<reference key="1">
    <citation type="submission" date="2007-12" db="EMBL/GenBank/DDBJ databases">
        <title>Complete sequence of Methylobacterium extorquens PA1.</title>
        <authorList>
            <consortium name="US DOE Joint Genome Institute"/>
            <person name="Copeland A."/>
            <person name="Lucas S."/>
            <person name="Lapidus A."/>
            <person name="Barry K."/>
            <person name="Glavina del Rio T."/>
            <person name="Dalin E."/>
            <person name="Tice H."/>
            <person name="Pitluck S."/>
            <person name="Saunders E."/>
            <person name="Brettin T."/>
            <person name="Bruce D."/>
            <person name="Detter J.C."/>
            <person name="Han C."/>
            <person name="Schmutz J."/>
            <person name="Larimer F."/>
            <person name="Land M."/>
            <person name="Hauser L."/>
            <person name="Kyrpides N."/>
            <person name="Kim E."/>
            <person name="Marx C."/>
            <person name="Richardson P."/>
        </authorList>
    </citation>
    <scope>NUCLEOTIDE SEQUENCE [LARGE SCALE GENOMIC DNA]</scope>
    <source>
        <strain>PA1</strain>
    </source>
</reference>
<accession>A9W381</accession>
<keyword id="KW-0227">DNA damage</keyword>
<keyword id="KW-0233">DNA recombination</keyword>
<keyword id="KW-0234">DNA repair</keyword>
<keyword id="KW-0479">Metal-binding</keyword>
<keyword id="KW-0862">Zinc</keyword>
<keyword id="KW-0863">Zinc-finger</keyword>
<name>RECR_METEP</name>
<comment type="function">
    <text evidence="1">May play a role in DNA repair. It seems to be involved in an RecBC-independent recombinational process of DNA repair. It may act with RecF and RecO.</text>
</comment>
<comment type="similarity">
    <text evidence="1">Belongs to the RecR family.</text>
</comment>
<proteinExistence type="inferred from homology"/>
<organism>
    <name type="scientific">Methylorubrum extorquens (strain PA1)</name>
    <name type="common">Methylobacterium extorquens</name>
    <dbReference type="NCBI Taxonomy" id="419610"/>
    <lineage>
        <taxon>Bacteria</taxon>
        <taxon>Pseudomonadati</taxon>
        <taxon>Pseudomonadota</taxon>
        <taxon>Alphaproteobacteria</taxon>
        <taxon>Hyphomicrobiales</taxon>
        <taxon>Methylobacteriaceae</taxon>
        <taxon>Methylorubrum</taxon>
    </lineage>
</organism>
<dbReference type="EMBL" id="CP000908">
    <property type="protein sequence ID" value="ABY30037.1"/>
    <property type="molecule type" value="Genomic_DNA"/>
</dbReference>
<dbReference type="RefSeq" id="WP_003599880.1">
    <property type="nucleotide sequence ID" value="NC_010172.1"/>
</dbReference>
<dbReference type="SMR" id="A9W381"/>
<dbReference type="GeneID" id="72989295"/>
<dbReference type="KEGG" id="mex:Mext_1638"/>
<dbReference type="eggNOG" id="COG0353">
    <property type="taxonomic scope" value="Bacteria"/>
</dbReference>
<dbReference type="HOGENOM" id="CLU_060739_1_1_5"/>
<dbReference type="BioCyc" id="MEXT419610:MEXT_RS08315-MONOMER"/>
<dbReference type="GO" id="GO:0003677">
    <property type="term" value="F:DNA binding"/>
    <property type="evidence" value="ECO:0007669"/>
    <property type="project" value="UniProtKB-UniRule"/>
</dbReference>
<dbReference type="GO" id="GO:0008270">
    <property type="term" value="F:zinc ion binding"/>
    <property type="evidence" value="ECO:0007669"/>
    <property type="project" value="UniProtKB-KW"/>
</dbReference>
<dbReference type="GO" id="GO:0006310">
    <property type="term" value="P:DNA recombination"/>
    <property type="evidence" value="ECO:0007669"/>
    <property type="project" value="UniProtKB-UniRule"/>
</dbReference>
<dbReference type="GO" id="GO:0006281">
    <property type="term" value="P:DNA repair"/>
    <property type="evidence" value="ECO:0007669"/>
    <property type="project" value="UniProtKB-UniRule"/>
</dbReference>
<dbReference type="CDD" id="cd01025">
    <property type="entry name" value="TOPRIM_recR"/>
    <property type="match status" value="1"/>
</dbReference>
<dbReference type="Gene3D" id="3.40.1360.10">
    <property type="match status" value="1"/>
</dbReference>
<dbReference type="Gene3D" id="6.10.250.240">
    <property type="match status" value="1"/>
</dbReference>
<dbReference type="Gene3D" id="1.10.8.420">
    <property type="entry name" value="RecR Domain 1"/>
    <property type="match status" value="1"/>
</dbReference>
<dbReference type="HAMAP" id="MF_00017">
    <property type="entry name" value="RecR"/>
    <property type="match status" value="1"/>
</dbReference>
<dbReference type="InterPro" id="IPR000093">
    <property type="entry name" value="DNA_Rcmb_RecR"/>
</dbReference>
<dbReference type="InterPro" id="IPR023627">
    <property type="entry name" value="Rcmb_RecR"/>
</dbReference>
<dbReference type="InterPro" id="IPR015967">
    <property type="entry name" value="Rcmb_RecR_Znf"/>
</dbReference>
<dbReference type="InterPro" id="IPR006171">
    <property type="entry name" value="TOPRIM_dom"/>
</dbReference>
<dbReference type="InterPro" id="IPR034137">
    <property type="entry name" value="TOPRIM_RecR"/>
</dbReference>
<dbReference type="NCBIfam" id="TIGR00615">
    <property type="entry name" value="recR"/>
    <property type="match status" value="1"/>
</dbReference>
<dbReference type="PANTHER" id="PTHR30446">
    <property type="entry name" value="RECOMBINATION PROTEIN RECR"/>
    <property type="match status" value="1"/>
</dbReference>
<dbReference type="PANTHER" id="PTHR30446:SF0">
    <property type="entry name" value="RECOMBINATION PROTEIN RECR"/>
    <property type="match status" value="1"/>
</dbReference>
<dbReference type="Pfam" id="PF21175">
    <property type="entry name" value="RecR_C"/>
    <property type="match status" value="1"/>
</dbReference>
<dbReference type="Pfam" id="PF21176">
    <property type="entry name" value="RecR_HhH"/>
    <property type="match status" value="1"/>
</dbReference>
<dbReference type="Pfam" id="PF02132">
    <property type="entry name" value="RecR_ZnF"/>
    <property type="match status" value="1"/>
</dbReference>
<dbReference type="Pfam" id="PF13662">
    <property type="entry name" value="Toprim_4"/>
    <property type="match status" value="1"/>
</dbReference>
<dbReference type="SMART" id="SM00493">
    <property type="entry name" value="TOPRIM"/>
    <property type="match status" value="1"/>
</dbReference>
<dbReference type="SUPFAM" id="SSF111304">
    <property type="entry name" value="Recombination protein RecR"/>
    <property type="match status" value="1"/>
</dbReference>
<dbReference type="PROSITE" id="PS01300">
    <property type="entry name" value="RECR"/>
    <property type="match status" value="1"/>
</dbReference>
<dbReference type="PROSITE" id="PS50880">
    <property type="entry name" value="TOPRIM"/>
    <property type="match status" value="1"/>
</dbReference>
<feature type="chain" id="PRO_1000089744" description="Recombination protein RecR">
    <location>
        <begin position="1"/>
        <end position="201"/>
    </location>
</feature>
<feature type="domain" description="Toprim" evidence="1">
    <location>
        <begin position="83"/>
        <end position="178"/>
    </location>
</feature>
<feature type="zinc finger region" description="C4-type" evidence="1">
    <location>
        <begin position="60"/>
        <end position="75"/>
    </location>
</feature>
<gene>
    <name evidence="1" type="primary">recR</name>
    <name type="ordered locus">Mext_1638</name>
</gene>
<evidence type="ECO:0000255" key="1">
    <source>
        <dbReference type="HAMAP-Rule" id="MF_00017"/>
    </source>
</evidence>
<sequence>MPQAVAGPEIERLIQLLGRMPGLGPRSARRAALQLIKKRETLLAPLADAMRVAAERIVVCRSCGNVDTSDPCTICRDETRDPTTLVVVEDVSDLWALERSGAVKARYHVLGGVLSALDGVRPEHLTIARLVERAGEPGVKEIILALNATVDGQTTAHYVTESIKPFGLTVTRLAHGVPVGGELDYLDEGTLTAAIRSRTAF</sequence>
<protein>
    <recommendedName>
        <fullName evidence="1">Recombination protein RecR</fullName>
    </recommendedName>
</protein>